<proteinExistence type="inferred from homology"/>
<evidence type="ECO:0000255" key="1">
    <source>
        <dbReference type="HAMAP-Rule" id="MF_00294"/>
    </source>
</evidence>
<evidence type="ECO:0000256" key="2">
    <source>
        <dbReference type="SAM" id="MobiDB-lite"/>
    </source>
</evidence>
<evidence type="ECO:0000305" key="3"/>
<dbReference type="EMBL" id="CP000552">
    <property type="protein sequence ID" value="ABM72158.1"/>
    <property type="status" value="ALT_INIT"/>
    <property type="molecule type" value="Genomic_DNA"/>
</dbReference>
<dbReference type="RefSeq" id="WP_011820260.1">
    <property type="nucleotide sequence ID" value="NC_008817.1"/>
</dbReference>
<dbReference type="SMR" id="A2BWJ7"/>
<dbReference type="STRING" id="167542.P9515_09511"/>
<dbReference type="GeneID" id="60201595"/>
<dbReference type="KEGG" id="pmc:P9515_09511"/>
<dbReference type="eggNOG" id="COG0267">
    <property type="taxonomic scope" value="Bacteria"/>
</dbReference>
<dbReference type="HOGENOM" id="CLU_190949_3_0_3"/>
<dbReference type="OrthoDB" id="9801333at2"/>
<dbReference type="Proteomes" id="UP000001589">
    <property type="component" value="Chromosome"/>
</dbReference>
<dbReference type="GO" id="GO:0005737">
    <property type="term" value="C:cytoplasm"/>
    <property type="evidence" value="ECO:0007669"/>
    <property type="project" value="UniProtKB-ARBA"/>
</dbReference>
<dbReference type="GO" id="GO:1990904">
    <property type="term" value="C:ribonucleoprotein complex"/>
    <property type="evidence" value="ECO:0007669"/>
    <property type="project" value="UniProtKB-KW"/>
</dbReference>
<dbReference type="GO" id="GO:0005840">
    <property type="term" value="C:ribosome"/>
    <property type="evidence" value="ECO:0007669"/>
    <property type="project" value="UniProtKB-KW"/>
</dbReference>
<dbReference type="GO" id="GO:0003735">
    <property type="term" value="F:structural constituent of ribosome"/>
    <property type="evidence" value="ECO:0007669"/>
    <property type="project" value="InterPro"/>
</dbReference>
<dbReference type="GO" id="GO:0006412">
    <property type="term" value="P:translation"/>
    <property type="evidence" value="ECO:0007669"/>
    <property type="project" value="UniProtKB-UniRule"/>
</dbReference>
<dbReference type="Gene3D" id="2.20.28.120">
    <property type="entry name" value="Ribosomal protein L33"/>
    <property type="match status" value="1"/>
</dbReference>
<dbReference type="HAMAP" id="MF_00294">
    <property type="entry name" value="Ribosomal_bL33"/>
    <property type="match status" value="1"/>
</dbReference>
<dbReference type="InterPro" id="IPR001705">
    <property type="entry name" value="Ribosomal_bL33"/>
</dbReference>
<dbReference type="InterPro" id="IPR038584">
    <property type="entry name" value="Ribosomal_bL33_sf"/>
</dbReference>
<dbReference type="InterPro" id="IPR011332">
    <property type="entry name" value="Ribosomal_zn-bd"/>
</dbReference>
<dbReference type="NCBIfam" id="NF001764">
    <property type="entry name" value="PRK00504.1"/>
    <property type="match status" value="1"/>
</dbReference>
<dbReference type="NCBIfam" id="NF001860">
    <property type="entry name" value="PRK00595.1"/>
    <property type="match status" value="1"/>
</dbReference>
<dbReference type="NCBIfam" id="TIGR01023">
    <property type="entry name" value="rpmG_bact"/>
    <property type="match status" value="1"/>
</dbReference>
<dbReference type="PANTHER" id="PTHR43168">
    <property type="entry name" value="50S RIBOSOMAL PROTEIN L33, CHLOROPLASTIC"/>
    <property type="match status" value="1"/>
</dbReference>
<dbReference type="PANTHER" id="PTHR43168:SF2">
    <property type="entry name" value="LARGE RIBOSOMAL SUBUNIT PROTEIN BL33C"/>
    <property type="match status" value="1"/>
</dbReference>
<dbReference type="Pfam" id="PF00471">
    <property type="entry name" value="Ribosomal_L33"/>
    <property type="match status" value="1"/>
</dbReference>
<dbReference type="SUPFAM" id="SSF57829">
    <property type="entry name" value="Zn-binding ribosomal proteins"/>
    <property type="match status" value="1"/>
</dbReference>
<keyword id="KW-0687">Ribonucleoprotein</keyword>
<keyword id="KW-0689">Ribosomal protein</keyword>
<sequence length="64" mass="7488">MAKKGTRVVVTLECTEARTSSEPRRSNGISRYTTEKNKRNTTERLELKKFNPHLNKMTIHKEIK</sequence>
<feature type="chain" id="PRO_0000356613" description="Large ribosomal subunit protein bL33">
    <location>
        <begin position="1"/>
        <end position="64"/>
    </location>
</feature>
<feature type="region of interest" description="Disordered" evidence="2">
    <location>
        <begin position="16"/>
        <end position="39"/>
    </location>
</feature>
<feature type="compositionally biased region" description="Basic and acidic residues" evidence="2">
    <location>
        <begin position="16"/>
        <end position="25"/>
    </location>
</feature>
<name>RL33_PROM5</name>
<protein>
    <recommendedName>
        <fullName evidence="1">Large ribosomal subunit protein bL33</fullName>
    </recommendedName>
    <alternativeName>
        <fullName evidence="3">50S ribosomal protein L33</fullName>
    </alternativeName>
</protein>
<accession>A2BWJ7</accession>
<comment type="similarity">
    <text evidence="1">Belongs to the bacterial ribosomal protein bL33 family.</text>
</comment>
<comment type="sequence caution" evidence="3">
    <conflict type="erroneous initiation">
        <sequence resource="EMBL-CDS" id="ABM72158"/>
    </conflict>
</comment>
<gene>
    <name evidence="1" type="primary">rpmG</name>
    <name evidence="1" type="synonym">rpl33</name>
    <name type="ordered locus">P9515_09511</name>
</gene>
<organism>
    <name type="scientific">Prochlorococcus marinus (strain MIT 9515)</name>
    <dbReference type="NCBI Taxonomy" id="167542"/>
    <lineage>
        <taxon>Bacteria</taxon>
        <taxon>Bacillati</taxon>
        <taxon>Cyanobacteriota</taxon>
        <taxon>Cyanophyceae</taxon>
        <taxon>Synechococcales</taxon>
        <taxon>Prochlorococcaceae</taxon>
        <taxon>Prochlorococcus</taxon>
    </lineage>
</organism>
<reference key="1">
    <citation type="journal article" date="2007" name="PLoS Genet.">
        <title>Patterns and implications of gene gain and loss in the evolution of Prochlorococcus.</title>
        <authorList>
            <person name="Kettler G.C."/>
            <person name="Martiny A.C."/>
            <person name="Huang K."/>
            <person name="Zucker J."/>
            <person name="Coleman M.L."/>
            <person name="Rodrigue S."/>
            <person name="Chen F."/>
            <person name="Lapidus A."/>
            <person name="Ferriera S."/>
            <person name="Johnson J."/>
            <person name="Steglich C."/>
            <person name="Church G.M."/>
            <person name="Richardson P."/>
            <person name="Chisholm S.W."/>
        </authorList>
    </citation>
    <scope>NUCLEOTIDE SEQUENCE [LARGE SCALE GENOMIC DNA]</scope>
    <source>
        <strain>MIT 9515</strain>
    </source>
</reference>